<gene>
    <name evidence="1" type="primary">cobS</name>
    <name type="ordered locus">Tbd_2710</name>
</gene>
<feature type="chain" id="PRO_1000132613" description="Adenosylcobinamide-GDP ribazoletransferase">
    <location>
        <begin position="1"/>
        <end position="247"/>
    </location>
</feature>
<feature type="transmembrane region" description="Helical" evidence="1">
    <location>
        <begin position="31"/>
        <end position="51"/>
    </location>
</feature>
<feature type="transmembrane region" description="Helical" evidence="1">
    <location>
        <begin position="57"/>
        <end position="77"/>
    </location>
</feature>
<feature type="transmembrane region" description="Helical" evidence="1">
    <location>
        <begin position="109"/>
        <end position="129"/>
    </location>
</feature>
<feature type="transmembrane region" description="Helical" evidence="1">
    <location>
        <begin position="136"/>
        <end position="156"/>
    </location>
</feature>
<feature type="transmembrane region" description="Helical" evidence="1">
    <location>
        <begin position="189"/>
        <end position="209"/>
    </location>
</feature>
<feature type="transmembrane region" description="Helical" evidence="1">
    <location>
        <begin position="218"/>
        <end position="238"/>
    </location>
</feature>
<comment type="function">
    <text evidence="1">Joins adenosylcobinamide-GDP and alpha-ribazole to generate adenosylcobalamin (Ado-cobalamin). Also synthesizes adenosylcobalamin 5'-phosphate from adenosylcobinamide-GDP and alpha-ribazole 5'-phosphate.</text>
</comment>
<comment type="catalytic activity">
    <reaction evidence="1">
        <text>alpha-ribazole + adenosylcob(III)inamide-GDP = adenosylcob(III)alamin + GMP + H(+)</text>
        <dbReference type="Rhea" id="RHEA:16049"/>
        <dbReference type="ChEBI" id="CHEBI:10329"/>
        <dbReference type="ChEBI" id="CHEBI:15378"/>
        <dbReference type="ChEBI" id="CHEBI:18408"/>
        <dbReference type="ChEBI" id="CHEBI:58115"/>
        <dbReference type="ChEBI" id="CHEBI:60487"/>
        <dbReference type="EC" id="2.7.8.26"/>
    </reaction>
</comment>
<comment type="catalytic activity">
    <reaction evidence="1">
        <text>alpha-ribazole 5'-phosphate + adenosylcob(III)inamide-GDP = adenosylcob(III)alamin 5'-phosphate + GMP + H(+)</text>
        <dbReference type="Rhea" id="RHEA:23560"/>
        <dbReference type="ChEBI" id="CHEBI:15378"/>
        <dbReference type="ChEBI" id="CHEBI:57918"/>
        <dbReference type="ChEBI" id="CHEBI:58115"/>
        <dbReference type="ChEBI" id="CHEBI:60487"/>
        <dbReference type="ChEBI" id="CHEBI:60493"/>
        <dbReference type="EC" id="2.7.8.26"/>
    </reaction>
</comment>
<comment type="cofactor">
    <cofactor evidence="1">
        <name>Mg(2+)</name>
        <dbReference type="ChEBI" id="CHEBI:18420"/>
    </cofactor>
</comment>
<comment type="pathway">
    <text evidence="1">Cofactor biosynthesis; adenosylcobalamin biosynthesis; adenosylcobalamin from cob(II)yrinate a,c-diamide: step 7/7.</text>
</comment>
<comment type="subcellular location">
    <subcellularLocation>
        <location evidence="1">Cell inner membrane</location>
        <topology evidence="1">Multi-pass membrane protein</topology>
    </subcellularLocation>
</comment>
<comment type="similarity">
    <text evidence="1">Belongs to the CobS family.</text>
</comment>
<reference key="1">
    <citation type="journal article" date="2006" name="J. Bacteriol.">
        <title>The genome sequence of the obligately chemolithoautotrophic, facultatively anaerobic bacterium Thiobacillus denitrificans.</title>
        <authorList>
            <person name="Beller H.R."/>
            <person name="Chain P.S."/>
            <person name="Letain T.E."/>
            <person name="Chakicherla A."/>
            <person name="Larimer F.W."/>
            <person name="Richardson P.M."/>
            <person name="Coleman M.A."/>
            <person name="Wood A.P."/>
            <person name="Kelly D.P."/>
        </authorList>
    </citation>
    <scope>NUCLEOTIDE SEQUENCE [LARGE SCALE GENOMIC DNA]</scope>
    <source>
        <strain>ATCC 25259 / T1</strain>
    </source>
</reference>
<dbReference type="EC" id="2.7.8.26" evidence="1"/>
<dbReference type="EMBL" id="CP000116">
    <property type="protein sequence ID" value="AAZ98663.1"/>
    <property type="molecule type" value="Genomic_DNA"/>
</dbReference>
<dbReference type="STRING" id="292415.Tbd_2710"/>
<dbReference type="KEGG" id="tbd:Tbd_2710"/>
<dbReference type="eggNOG" id="COG0368">
    <property type="taxonomic scope" value="Bacteria"/>
</dbReference>
<dbReference type="HOGENOM" id="CLU_057426_3_1_4"/>
<dbReference type="OrthoDB" id="9794626at2"/>
<dbReference type="UniPathway" id="UPA00148">
    <property type="reaction ID" value="UER00238"/>
</dbReference>
<dbReference type="Proteomes" id="UP000008291">
    <property type="component" value="Chromosome"/>
</dbReference>
<dbReference type="GO" id="GO:0005886">
    <property type="term" value="C:plasma membrane"/>
    <property type="evidence" value="ECO:0007669"/>
    <property type="project" value="UniProtKB-SubCell"/>
</dbReference>
<dbReference type="GO" id="GO:0051073">
    <property type="term" value="F:adenosylcobinamide-GDP ribazoletransferase activity"/>
    <property type="evidence" value="ECO:0007669"/>
    <property type="project" value="UniProtKB-UniRule"/>
</dbReference>
<dbReference type="GO" id="GO:0008818">
    <property type="term" value="F:cobalamin 5'-phosphate synthase activity"/>
    <property type="evidence" value="ECO:0007669"/>
    <property type="project" value="UniProtKB-UniRule"/>
</dbReference>
<dbReference type="GO" id="GO:0009236">
    <property type="term" value="P:cobalamin biosynthetic process"/>
    <property type="evidence" value="ECO:0007669"/>
    <property type="project" value="UniProtKB-UniRule"/>
</dbReference>
<dbReference type="HAMAP" id="MF_00719">
    <property type="entry name" value="CobS"/>
    <property type="match status" value="1"/>
</dbReference>
<dbReference type="InterPro" id="IPR003805">
    <property type="entry name" value="CobS"/>
</dbReference>
<dbReference type="NCBIfam" id="TIGR00317">
    <property type="entry name" value="cobS"/>
    <property type="match status" value="1"/>
</dbReference>
<dbReference type="PANTHER" id="PTHR34148">
    <property type="entry name" value="ADENOSYLCOBINAMIDE-GDP RIBAZOLETRANSFERASE"/>
    <property type="match status" value="1"/>
</dbReference>
<dbReference type="PANTHER" id="PTHR34148:SF1">
    <property type="entry name" value="ADENOSYLCOBINAMIDE-GDP RIBAZOLETRANSFERASE"/>
    <property type="match status" value="1"/>
</dbReference>
<dbReference type="Pfam" id="PF02654">
    <property type="entry name" value="CobS"/>
    <property type="match status" value="1"/>
</dbReference>
<sequence length="247" mass="25699">MRGLILALGFLTRLPLPVLRDFQCAELVRAVVWFPAAGLVVGAAVALAAALGTVLDPWLGALAGVVMWAWITGGLHLDGLADTADALGAAHRDPARFLTVLADPHVGSFGVIVLVLQLAAKLVLLHWLLTLDLPWPALVLIPAWTRWAAAGWTLLLPPLKPGLGERFAWQGNRAGWGAGGLALAAVSAITPIAFVALIPAVLWGVWMWLKLGGQTGDILGAGIEWSESAALLLAGVSLALARGIIAG</sequence>
<name>COBS_THIDA</name>
<evidence type="ECO:0000255" key="1">
    <source>
        <dbReference type="HAMAP-Rule" id="MF_00719"/>
    </source>
</evidence>
<keyword id="KW-0997">Cell inner membrane</keyword>
<keyword id="KW-1003">Cell membrane</keyword>
<keyword id="KW-0169">Cobalamin biosynthesis</keyword>
<keyword id="KW-0460">Magnesium</keyword>
<keyword id="KW-0472">Membrane</keyword>
<keyword id="KW-1185">Reference proteome</keyword>
<keyword id="KW-0808">Transferase</keyword>
<keyword id="KW-0812">Transmembrane</keyword>
<keyword id="KW-1133">Transmembrane helix</keyword>
<protein>
    <recommendedName>
        <fullName evidence="1">Adenosylcobinamide-GDP ribazoletransferase</fullName>
        <ecNumber evidence="1">2.7.8.26</ecNumber>
    </recommendedName>
    <alternativeName>
        <fullName evidence="1">Cobalamin synthase</fullName>
    </alternativeName>
    <alternativeName>
        <fullName evidence="1">Cobalamin-5'-phosphate synthase</fullName>
    </alternativeName>
</protein>
<accession>Q3SFE7</accession>
<proteinExistence type="inferred from homology"/>
<organism>
    <name type="scientific">Thiobacillus denitrificans (strain ATCC 25259 / T1)</name>
    <dbReference type="NCBI Taxonomy" id="292415"/>
    <lineage>
        <taxon>Bacteria</taxon>
        <taxon>Pseudomonadati</taxon>
        <taxon>Pseudomonadota</taxon>
        <taxon>Betaproteobacteria</taxon>
        <taxon>Nitrosomonadales</taxon>
        <taxon>Thiobacillaceae</taxon>
        <taxon>Thiobacillus</taxon>
    </lineage>
</organism>